<reference key="1">
    <citation type="journal article" date="2006" name="J. Bacteriol.">
        <title>Pathogenomic sequence analysis of Bacillus cereus and Bacillus thuringiensis isolates closely related to Bacillus anthracis.</title>
        <authorList>
            <person name="Han C.S."/>
            <person name="Xie G."/>
            <person name="Challacombe J.F."/>
            <person name="Altherr M.R."/>
            <person name="Bhotika S.S."/>
            <person name="Bruce D."/>
            <person name="Campbell C.S."/>
            <person name="Campbell M.L."/>
            <person name="Chen J."/>
            <person name="Chertkov O."/>
            <person name="Cleland C."/>
            <person name="Dimitrijevic M."/>
            <person name="Doggett N.A."/>
            <person name="Fawcett J.J."/>
            <person name="Glavina T."/>
            <person name="Goodwin L.A."/>
            <person name="Hill K.K."/>
            <person name="Hitchcock P."/>
            <person name="Jackson P.J."/>
            <person name="Keim P."/>
            <person name="Kewalramani A.R."/>
            <person name="Longmire J."/>
            <person name="Lucas S."/>
            <person name="Malfatti S."/>
            <person name="McMurry K."/>
            <person name="Meincke L.J."/>
            <person name="Misra M."/>
            <person name="Moseman B.L."/>
            <person name="Mundt M."/>
            <person name="Munk A.C."/>
            <person name="Okinaka R.T."/>
            <person name="Parson-Quintana B."/>
            <person name="Reilly L.P."/>
            <person name="Richardson P."/>
            <person name="Robinson D.L."/>
            <person name="Rubin E."/>
            <person name="Saunders E."/>
            <person name="Tapia R."/>
            <person name="Tesmer J.G."/>
            <person name="Thayer N."/>
            <person name="Thompson L.S."/>
            <person name="Tice H."/>
            <person name="Ticknor L.O."/>
            <person name="Wills P.L."/>
            <person name="Brettin T.S."/>
            <person name="Gilna P."/>
        </authorList>
    </citation>
    <scope>NUCLEOTIDE SEQUENCE [LARGE SCALE GENOMIC DNA]</scope>
    <source>
        <strain>ZK / E33L</strain>
    </source>
</reference>
<evidence type="ECO:0000255" key="1">
    <source>
        <dbReference type="HAMAP-Rule" id="MF_00278"/>
    </source>
</evidence>
<dbReference type="EC" id="4.3.2.10" evidence="1"/>
<dbReference type="EC" id="3.5.1.2" evidence="1"/>
<dbReference type="EMBL" id="CP000001">
    <property type="protein sequence ID" value="AAU18955.1"/>
    <property type="molecule type" value="Genomic_DNA"/>
</dbReference>
<dbReference type="RefSeq" id="WP_000560342.1">
    <property type="nucleotide sequence ID" value="NZ_CP009968.1"/>
</dbReference>
<dbReference type="SMR" id="Q63DX0"/>
<dbReference type="KEGG" id="bcz:BCE33L1293"/>
<dbReference type="PATRIC" id="fig|288681.22.peg.4261"/>
<dbReference type="UniPathway" id="UPA00031">
    <property type="reaction ID" value="UER00010"/>
</dbReference>
<dbReference type="Proteomes" id="UP000002612">
    <property type="component" value="Chromosome"/>
</dbReference>
<dbReference type="GO" id="GO:0005737">
    <property type="term" value="C:cytoplasm"/>
    <property type="evidence" value="ECO:0007669"/>
    <property type="project" value="UniProtKB-SubCell"/>
</dbReference>
<dbReference type="GO" id="GO:0004359">
    <property type="term" value="F:glutaminase activity"/>
    <property type="evidence" value="ECO:0007669"/>
    <property type="project" value="UniProtKB-EC"/>
</dbReference>
<dbReference type="GO" id="GO:0000107">
    <property type="term" value="F:imidazoleglycerol-phosphate synthase activity"/>
    <property type="evidence" value="ECO:0007669"/>
    <property type="project" value="UniProtKB-UniRule"/>
</dbReference>
<dbReference type="GO" id="GO:0016829">
    <property type="term" value="F:lyase activity"/>
    <property type="evidence" value="ECO:0007669"/>
    <property type="project" value="UniProtKB-KW"/>
</dbReference>
<dbReference type="GO" id="GO:0000105">
    <property type="term" value="P:L-histidine biosynthetic process"/>
    <property type="evidence" value="ECO:0007669"/>
    <property type="project" value="UniProtKB-UniRule"/>
</dbReference>
<dbReference type="CDD" id="cd01748">
    <property type="entry name" value="GATase1_IGP_Synthase"/>
    <property type="match status" value="1"/>
</dbReference>
<dbReference type="FunFam" id="3.40.50.880:FF:000028">
    <property type="entry name" value="Imidazole glycerol phosphate synthase subunit HisH"/>
    <property type="match status" value="1"/>
</dbReference>
<dbReference type="Gene3D" id="3.40.50.880">
    <property type="match status" value="1"/>
</dbReference>
<dbReference type="HAMAP" id="MF_00278">
    <property type="entry name" value="HisH"/>
    <property type="match status" value="1"/>
</dbReference>
<dbReference type="InterPro" id="IPR029062">
    <property type="entry name" value="Class_I_gatase-like"/>
</dbReference>
<dbReference type="InterPro" id="IPR017926">
    <property type="entry name" value="GATASE"/>
</dbReference>
<dbReference type="InterPro" id="IPR010139">
    <property type="entry name" value="Imidazole-glycPsynth_HisH"/>
</dbReference>
<dbReference type="NCBIfam" id="TIGR01855">
    <property type="entry name" value="IMP_synth_hisH"/>
    <property type="match status" value="1"/>
</dbReference>
<dbReference type="PANTHER" id="PTHR42701">
    <property type="entry name" value="IMIDAZOLE GLYCEROL PHOSPHATE SYNTHASE SUBUNIT HISH"/>
    <property type="match status" value="1"/>
</dbReference>
<dbReference type="PANTHER" id="PTHR42701:SF1">
    <property type="entry name" value="IMIDAZOLE GLYCEROL PHOSPHATE SYNTHASE SUBUNIT HISH"/>
    <property type="match status" value="1"/>
</dbReference>
<dbReference type="Pfam" id="PF00117">
    <property type="entry name" value="GATase"/>
    <property type="match status" value="1"/>
</dbReference>
<dbReference type="PIRSF" id="PIRSF000495">
    <property type="entry name" value="Amidotransf_hisH"/>
    <property type="match status" value="1"/>
</dbReference>
<dbReference type="SUPFAM" id="SSF52317">
    <property type="entry name" value="Class I glutamine amidotransferase-like"/>
    <property type="match status" value="1"/>
</dbReference>
<dbReference type="PROSITE" id="PS51273">
    <property type="entry name" value="GATASE_TYPE_1"/>
    <property type="match status" value="1"/>
</dbReference>
<gene>
    <name evidence="1" type="primary">hisH</name>
    <name type="ordered locus">BCE33L1293</name>
</gene>
<sequence>MIAIIDYGMGNIRSVEQALKYIGAAYIVTSDKEEIFRSDGVILPGVGAFPKAMDILEEKDLVRVLQEIGRSRKPLLGICLGMQLLFEKSEELQDCNGLSLLPGVIRKLKVPYKIPHMGWNELKKEGEIALWNGVEDGSFVYYVHSYYADCPNEIVYGISDYGVKVPGFVAKGNIYGAQFHPEKSGDIGMQILKNFKGVVETWKSSQLSI</sequence>
<name>HIS5_BACCZ</name>
<keyword id="KW-0028">Amino-acid biosynthesis</keyword>
<keyword id="KW-0963">Cytoplasm</keyword>
<keyword id="KW-0315">Glutamine amidotransferase</keyword>
<keyword id="KW-0368">Histidine biosynthesis</keyword>
<keyword id="KW-0378">Hydrolase</keyword>
<keyword id="KW-0456">Lyase</keyword>
<comment type="function">
    <text evidence="1">IGPS catalyzes the conversion of PRFAR and glutamine to IGP, AICAR and glutamate. The HisH subunit catalyzes the hydrolysis of glutamine to glutamate and ammonia as part of the synthesis of IGP and AICAR. The resulting ammonia molecule is channeled to the active site of HisF.</text>
</comment>
<comment type="catalytic activity">
    <reaction evidence="1">
        <text>5-[(5-phospho-1-deoxy-D-ribulos-1-ylimino)methylamino]-1-(5-phospho-beta-D-ribosyl)imidazole-4-carboxamide + L-glutamine = D-erythro-1-(imidazol-4-yl)glycerol 3-phosphate + 5-amino-1-(5-phospho-beta-D-ribosyl)imidazole-4-carboxamide + L-glutamate + H(+)</text>
        <dbReference type="Rhea" id="RHEA:24793"/>
        <dbReference type="ChEBI" id="CHEBI:15378"/>
        <dbReference type="ChEBI" id="CHEBI:29985"/>
        <dbReference type="ChEBI" id="CHEBI:58278"/>
        <dbReference type="ChEBI" id="CHEBI:58359"/>
        <dbReference type="ChEBI" id="CHEBI:58475"/>
        <dbReference type="ChEBI" id="CHEBI:58525"/>
        <dbReference type="EC" id="4.3.2.10"/>
    </reaction>
</comment>
<comment type="catalytic activity">
    <reaction evidence="1">
        <text>L-glutamine + H2O = L-glutamate + NH4(+)</text>
        <dbReference type="Rhea" id="RHEA:15889"/>
        <dbReference type="ChEBI" id="CHEBI:15377"/>
        <dbReference type="ChEBI" id="CHEBI:28938"/>
        <dbReference type="ChEBI" id="CHEBI:29985"/>
        <dbReference type="ChEBI" id="CHEBI:58359"/>
        <dbReference type="EC" id="3.5.1.2"/>
    </reaction>
</comment>
<comment type="pathway">
    <text evidence="1">Amino-acid biosynthesis; L-histidine biosynthesis; L-histidine from 5-phospho-alpha-D-ribose 1-diphosphate: step 5/9.</text>
</comment>
<comment type="subunit">
    <text evidence="1">Heterodimer of HisH and HisF.</text>
</comment>
<comment type="subcellular location">
    <subcellularLocation>
        <location evidence="1">Cytoplasm</location>
    </subcellularLocation>
</comment>
<protein>
    <recommendedName>
        <fullName evidence="1">Imidazole glycerol phosphate synthase subunit HisH</fullName>
        <ecNumber evidence="1">4.3.2.10</ecNumber>
    </recommendedName>
    <alternativeName>
        <fullName evidence="1">IGP synthase glutaminase subunit</fullName>
        <ecNumber evidence="1">3.5.1.2</ecNumber>
    </alternativeName>
    <alternativeName>
        <fullName evidence="1">IGP synthase subunit HisH</fullName>
    </alternativeName>
    <alternativeName>
        <fullName evidence="1">ImGP synthase subunit HisH</fullName>
        <shortName evidence="1">IGPS subunit HisH</shortName>
    </alternativeName>
</protein>
<proteinExistence type="inferred from homology"/>
<accession>Q63DX0</accession>
<feature type="chain" id="PRO_0000152340" description="Imidazole glycerol phosphate synthase subunit HisH">
    <location>
        <begin position="1"/>
        <end position="209"/>
    </location>
</feature>
<feature type="domain" description="Glutamine amidotransferase type-1" evidence="1">
    <location>
        <begin position="1"/>
        <end position="205"/>
    </location>
</feature>
<feature type="active site" description="Nucleophile" evidence="1">
    <location>
        <position position="79"/>
    </location>
</feature>
<feature type="active site" evidence="1">
    <location>
        <position position="180"/>
    </location>
</feature>
<feature type="active site" evidence="1">
    <location>
        <position position="182"/>
    </location>
</feature>
<organism>
    <name type="scientific">Bacillus cereus (strain ZK / E33L)</name>
    <dbReference type="NCBI Taxonomy" id="288681"/>
    <lineage>
        <taxon>Bacteria</taxon>
        <taxon>Bacillati</taxon>
        <taxon>Bacillota</taxon>
        <taxon>Bacilli</taxon>
        <taxon>Bacillales</taxon>
        <taxon>Bacillaceae</taxon>
        <taxon>Bacillus</taxon>
        <taxon>Bacillus cereus group</taxon>
    </lineage>
</organism>